<keyword id="KW-0040">ANK repeat</keyword>
<keyword id="KW-0677">Repeat</keyword>
<protein>
    <recommendedName>
        <fullName>Putative ankyrin repeat protein RF_0922</fullName>
    </recommendedName>
</protein>
<reference key="1">
    <citation type="journal article" date="2005" name="PLoS Biol.">
        <title>The genome sequence of Rickettsia felis identifies the first putative conjugative plasmid in an obligate intracellular parasite.</title>
        <authorList>
            <person name="Ogata H."/>
            <person name="Renesto P."/>
            <person name="Audic S."/>
            <person name="Robert C."/>
            <person name="Blanc G."/>
            <person name="Fournier P.-E."/>
            <person name="Parinello H."/>
            <person name="Claverie J.-M."/>
            <person name="Raoult D."/>
        </authorList>
    </citation>
    <scope>NUCLEOTIDE SEQUENCE [LARGE SCALE GENOMIC DNA]</scope>
    <source>
        <strain>ATCC VR-1525 / URRWXCal2</strain>
    </source>
</reference>
<gene>
    <name type="ordered locus">RF_0922</name>
</gene>
<name>Y922_RICFE</name>
<dbReference type="EMBL" id="CP000053">
    <property type="protein sequence ID" value="AAY61773.1"/>
    <property type="molecule type" value="Genomic_DNA"/>
</dbReference>
<dbReference type="SMR" id="Q4UL00"/>
<dbReference type="STRING" id="315456.RF_0922"/>
<dbReference type="KEGG" id="rfe:RF_0922"/>
<dbReference type="eggNOG" id="COG0666">
    <property type="taxonomic scope" value="Bacteria"/>
</dbReference>
<dbReference type="HOGENOM" id="CLU_1502369_0_0_5"/>
<dbReference type="OrthoDB" id="5515126at2"/>
<dbReference type="Proteomes" id="UP000008548">
    <property type="component" value="Chromosome"/>
</dbReference>
<dbReference type="GO" id="GO:0005737">
    <property type="term" value="C:cytoplasm"/>
    <property type="evidence" value="ECO:0007669"/>
    <property type="project" value="TreeGrafter"/>
</dbReference>
<dbReference type="Gene3D" id="1.25.40.20">
    <property type="entry name" value="Ankyrin repeat-containing domain"/>
    <property type="match status" value="2"/>
</dbReference>
<dbReference type="InterPro" id="IPR051631">
    <property type="entry name" value="Ankyrin-KH/SAM_domain"/>
</dbReference>
<dbReference type="InterPro" id="IPR002110">
    <property type="entry name" value="Ankyrin_rpt"/>
</dbReference>
<dbReference type="InterPro" id="IPR036770">
    <property type="entry name" value="Ankyrin_rpt-contain_sf"/>
</dbReference>
<dbReference type="PANTHER" id="PTHR23206:SF8">
    <property type="entry name" value="ANKYRIN REPEAT AND KH DOMAIN-CONTAINING 1"/>
    <property type="match status" value="1"/>
</dbReference>
<dbReference type="PANTHER" id="PTHR23206">
    <property type="entry name" value="MASK PROTEIN"/>
    <property type="match status" value="1"/>
</dbReference>
<dbReference type="Pfam" id="PF12796">
    <property type="entry name" value="Ank_2"/>
    <property type="match status" value="2"/>
</dbReference>
<dbReference type="SMART" id="SM00248">
    <property type="entry name" value="ANK"/>
    <property type="match status" value="5"/>
</dbReference>
<dbReference type="SUPFAM" id="SSF48403">
    <property type="entry name" value="Ankyrin repeat"/>
    <property type="match status" value="1"/>
</dbReference>
<dbReference type="PROSITE" id="PS50297">
    <property type="entry name" value="ANK_REP_REGION"/>
    <property type="match status" value="1"/>
</dbReference>
<organism>
    <name type="scientific">Rickettsia felis (strain ATCC VR-1525 / URRWXCal2)</name>
    <name type="common">Rickettsia azadi</name>
    <dbReference type="NCBI Taxonomy" id="315456"/>
    <lineage>
        <taxon>Bacteria</taxon>
        <taxon>Pseudomonadati</taxon>
        <taxon>Pseudomonadota</taxon>
        <taxon>Alphaproteobacteria</taxon>
        <taxon>Rickettsiales</taxon>
        <taxon>Rickettsiaceae</taxon>
        <taxon>Rickettsieae</taxon>
        <taxon>Rickettsia</taxon>
        <taxon>spotted fever group</taxon>
    </lineage>
</organism>
<feature type="chain" id="PRO_0000281753" description="Putative ankyrin repeat protein RF_0922">
    <location>
        <begin position="1"/>
        <end position="179"/>
    </location>
</feature>
<feature type="repeat" description="ANK 1">
    <location>
        <begin position="5"/>
        <end position="34"/>
    </location>
</feature>
<feature type="repeat" description="ANK 2">
    <location>
        <begin position="40"/>
        <end position="72"/>
    </location>
</feature>
<feature type="repeat" description="ANK 3">
    <location>
        <begin position="75"/>
        <end position="104"/>
    </location>
</feature>
<feature type="repeat" description="ANK 4">
    <location>
        <begin position="110"/>
        <end position="139"/>
    </location>
</feature>
<feature type="repeat" description="ANK 5">
    <location>
        <begin position="145"/>
        <end position="174"/>
    </location>
</feature>
<accession>Q4UL00</accession>
<sequence>MVTNKGCTALTWAVDKGLEKVCEILIPNMSEQAINHVNNNGSTALTLAAWKGLEKICRLLIPKMSPQAINHVTNNGNTALTLAAWKGLEKICELLIPKMSSQAINQVTNNGDTALTLAAWKGLEKICEMLIPKMSEQAINQVTNNGNTALTLAADKSLEKICEMLIPKMSKQAINHMAL</sequence>
<proteinExistence type="predicted"/>